<feature type="chain" id="PRO_0000209720" description="Probable type I inositol 1,4,5-trisphosphate 5-phosphatase">
    <location>
        <begin position="1"/>
        <end position="409"/>
    </location>
</feature>
<proteinExistence type="evidence at transcript level"/>
<sequence>MVQYLLITANVGSLFEPDARLHTSWIKTVADQVESVDPSFFVIHLQETGGKKFTECSQQVPIIINRLSTALPKFDLLRAYVDIDYEAIEYTALGALCFIKRSLWSNVSQFNFHTKKYEQLTSPKEVVTHGLENYPYVVKHKFPKDFWPSIKWGRKGYMQTRWKIENKVFDFVNAHLFHDESNLALIHENPQLYSQNRKRALDFVLAELSSKENGCTPLLFVFGDLNFRLDSRSFLNRLTERTAQHPVADQEQMGSLADGLQASAANLQVITHPSENLRRTVSAIEFRRESDSDDSQNSCVLRIEKKKFDYFNHKKLLDDWRSYRDDDKETENFQSMFEMHINFPPTYPWSEDPENSETLMKTRAPAWCDRVLMNKNAYSLVEEGEPQYRSFGMETCTGDHKPVMLTFNI</sequence>
<gene>
    <name type="primary">ipp-5</name>
    <name type="ORF">C09B8.1</name>
</gene>
<name>I5P1_CAEEL</name>
<keyword id="KW-0378">Hydrolase</keyword>
<keyword id="KW-1185">Reference proteome</keyword>
<organism>
    <name type="scientific">Caenorhabditis elegans</name>
    <dbReference type="NCBI Taxonomy" id="6239"/>
    <lineage>
        <taxon>Eukaryota</taxon>
        <taxon>Metazoa</taxon>
        <taxon>Ecdysozoa</taxon>
        <taxon>Nematoda</taxon>
        <taxon>Chromadorea</taxon>
        <taxon>Rhabditida</taxon>
        <taxon>Rhabditina</taxon>
        <taxon>Rhabditomorpha</taxon>
        <taxon>Rhabditoidea</taxon>
        <taxon>Rhabditidae</taxon>
        <taxon>Peloderinae</taxon>
        <taxon>Caenorhabditis</taxon>
    </lineage>
</organism>
<protein>
    <recommendedName>
        <fullName>Probable type I inositol 1,4,5-trisphosphate 5-phosphatase</fullName>
        <shortName>5PTase</shortName>
        <ecNumber>3.1.3.56</ecNumber>
    </recommendedName>
</protein>
<evidence type="ECO:0000305" key="1"/>
<accession>Q17848</accession>
<accession>Q8WRS7</accession>
<comment type="catalytic activity">
    <reaction>
        <text>1D-myo-inositol 1,4,5-trisphosphate + H2O = 1D-myo-inositol 1,4-bisphosphate + phosphate</text>
        <dbReference type="Rhea" id="RHEA:19797"/>
        <dbReference type="ChEBI" id="CHEBI:15377"/>
        <dbReference type="ChEBI" id="CHEBI:43474"/>
        <dbReference type="ChEBI" id="CHEBI:58282"/>
        <dbReference type="ChEBI" id="CHEBI:203600"/>
        <dbReference type="EC" id="3.1.3.56"/>
    </reaction>
</comment>
<comment type="catalytic activity">
    <reaction>
        <text>1D-myo-inositol 1,3,4,5-tetrakisphosphate + H2O = 1D-myo-inositol 1,3,4-trisphosphate + phosphate</text>
        <dbReference type="Rhea" id="RHEA:11392"/>
        <dbReference type="ChEBI" id="CHEBI:15377"/>
        <dbReference type="ChEBI" id="CHEBI:43474"/>
        <dbReference type="ChEBI" id="CHEBI:57895"/>
        <dbReference type="ChEBI" id="CHEBI:58414"/>
        <dbReference type="EC" id="3.1.3.56"/>
    </reaction>
</comment>
<comment type="similarity">
    <text evidence="1">Belongs to the inositol 1,4,5-trisphosphate 5-phosphatase type I family.</text>
</comment>
<reference key="1">
    <citation type="journal article" date="1998" name="Science">
        <title>Genome sequence of the nematode C. elegans: a platform for investigating biology.</title>
        <authorList>
            <consortium name="The C. elegans sequencing consortium"/>
        </authorList>
    </citation>
    <scope>NUCLEOTIDE SEQUENCE [LARGE SCALE GENOMIC DNA]</scope>
    <source>
        <strain>Bristol N2</strain>
    </source>
</reference>
<reference key="2">
    <citation type="submission" date="2002-02" db="EMBL/GenBank/DDBJ databases">
        <title>Expression map of C. elegans genome.</title>
        <authorList>
            <person name="Kohara Y."/>
            <person name="Motohashi T."/>
            <person name="Tabara H."/>
            <person name="Watanabe H."/>
            <person name="Sugimoto A."/>
            <person name="Sano M."/>
            <person name="Miyata A."/>
            <person name="Nishigaki A."/>
            <person name="Bui Y.K."/>
            <person name="Sternberg P.W."/>
        </authorList>
    </citation>
    <scope>NUCLEOTIDE SEQUENCE [LARGE SCALE MRNA] OF 1-400</scope>
</reference>
<dbReference type="EC" id="3.1.3.56"/>
<dbReference type="EMBL" id="FO080450">
    <property type="protein sequence ID" value="CCD63797.1"/>
    <property type="molecule type" value="Genomic_DNA"/>
</dbReference>
<dbReference type="EMBL" id="AF411588">
    <property type="protein sequence ID" value="AAL72637.1"/>
    <property type="molecule type" value="mRNA"/>
</dbReference>
<dbReference type="PIR" id="T15465">
    <property type="entry name" value="T15465"/>
</dbReference>
<dbReference type="RefSeq" id="NP_509008.2">
    <property type="nucleotide sequence ID" value="NM_076607.6"/>
</dbReference>
<dbReference type="BioGRID" id="45803">
    <property type="interactions" value="15"/>
</dbReference>
<dbReference type="FunCoup" id="Q17848">
    <property type="interactions" value="1204"/>
</dbReference>
<dbReference type="STRING" id="6239.C09B8.1a.1"/>
<dbReference type="iPTMnet" id="Q17848"/>
<dbReference type="PaxDb" id="6239-C09B8.1"/>
<dbReference type="PeptideAtlas" id="Q17848"/>
<dbReference type="EnsemblMetazoa" id="C09B8.1a.1">
    <property type="protein sequence ID" value="C09B8.1a.1"/>
    <property type="gene ID" value="WBGene00002146"/>
</dbReference>
<dbReference type="GeneID" id="180871"/>
<dbReference type="KEGG" id="cel:CELE_C09B8.1"/>
<dbReference type="UCSC" id="C09B8.1">
    <property type="organism name" value="c. elegans"/>
</dbReference>
<dbReference type="AGR" id="WB:WBGene00002146"/>
<dbReference type="CTD" id="180871"/>
<dbReference type="WormBase" id="C09B8.1a">
    <property type="protein sequence ID" value="CE30857"/>
    <property type="gene ID" value="WBGene00002146"/>
    <property type="gene designation" value="ipp-5"/>
</dbReference>
<dbReference type="eggNOG" id="KOG1976">
    <property type="taxonomic scope" value="Eukaryota"/>
</dbReference>
<dbReference type="GeneTree" id="ENSGT00390000015226"/>
<dbReference type="HOGENOM" id="CLU_057709_1_0_1"/>
<dbReference type="InParanoid" id="Q17848"/>
<dbReference type="OMA" id="FGMETCT"/>
<dbReference type="OrthoDB" id="5780965at2759"/>
<dbReference type="PhylomeDB" id="Q17848"/>
<dbReference type="Reactome" id="R-CEL-1855183">
    <property type="pathway name" value="Synthesis of IP2, IP, and Ins in the cytosol"/>
</dbReference>
<dbReference type="PRO" id="PR:Q17848"/>
<dbReference type="Proteomes" id="UP000001940">
    <property type="component" value="Chromosome X"/>
</dbReference>
<dbReference type="Bgee" id="WBGene00002146">
    <property type="expression patterns" value="Expressed in larva and 3 other cell types or tissues"/>
</dbReference>
<dbReference type="ExpressionAtlas" id="Q17848">
    <property type="expression patterns" value="baseline and differential"/>
</dbReference>
<dbReference type="GO" id="GO:0052745">
    <property type="term" value="F:inositol phosphate phosphatase activity"/>
    <property type="evidence" value="ECO:0000250"/>
    <property type="project" value="WormBase"/>
</dbReference>
<dbReference type="GO" id="GO:0052659">
    <property type="term" value="F:inositol-1,3,4,5-tetrakisphosphate 5-phosphatase activity"/>
    <property type="evidence" value="ECO:0007669"/>
    <property type="project" value="RHEA"/>
</dbReference>
<dbReference type="GO" id="GO:0052658">
    <property type="term" value="F:inositol-1,4,5-trisphosphate 5-phosphatase activity"/>
    <property type="evidence" value="ECO:0007669"/>
    <property type="project" value="RHEA"/>
</dbReference>
<dbReference type="GO" id="GO:0004445">
    <property type="term" value="F:inositol-polyphosphate 5-phosphatase activity"/>
    <property type="evidence" value="ECO:0000318"/>
    <property type="project" value="GO_Central"/>
</dbReference>
<dbReference type="GO" id="GO:0042059">
    <property type="term" value="P:negative regulation of epidermal growth factor receptor signaling pathway"/>
    <property type="evidence" value="ECO:0000316"/>
    <property type="project" value="WormBase"/>
</dbReference>
<dbReference type="GO" id="GO:0030728">
    <property type="term" value="P:ovulation"/>
    <property type="evidence" value="ECO:0000315"/>
    <property type="project" value="WormBase"/>
</dbReference>
<dbReference type="GO" id="GO:0046856">
    <property type="term" value="P:phosphatidylinositol dephosphorylation"/>
    <property type="evidence" value="ECO:0000250"/>
    <property type="project" value="WormBase"/>
</dbReference>
<dbReference type="CDD" id="cd09092">
    <property type="entry name" value="INPP5A"/>
    <property type="match status" value="1"/>
</dbReference>
<dbReference type="FunFam" id="3.60.10.10:FF:000112">
    <property type="entry name" value="Probable type I inositol 1,4,5-trisphosphate 5-phosphatase"/>
    <property type="match status" value="2"/>
</dbReference>
<dbReference type="Gene3D" id="3.60.10.10">
    <property type="entry name" value="Endonuclease/exonuclease/phosphatase"/>
    <property type="match status" value="1"/>
</dbReference>
<dbReference type="InterPro" id="IPR036691">
    <property type="entry name" value="Endo/exonu/phosph_ase_sf"/>
</dbReference>
<dbReference type="InterPro" id="IPR039737">
    <property type="entry name" value="INPP5A"/>
</dbReference>
<dbReference type="InterPro" id="IPR000300">
    <property type="entry name" value="IPPc"/>
</dbReference>
<dbReference type="PANTHER" id="PTHR12997:SF2">
    <property type="entry name" value="INOSITOL POLYPHOSPHATE-5-PHOSPHATASE A"/>
    <property type="match status" value="1"/>
</dbReference>
<dbReference type="PANTHER" id="PTHR12997">
    <property type="entry name" value="TYPE I INOSITOL-1,4,5-TRISPHOSPHATE 5-PHOSPHATASE"/>
    <property type="match status" value="1"/>
</dbReference>
<dbReference type="Pfam" id="PF22669">
    <property type="entry name" value="Exo_endo_phos2"/>
    <property type="match status" value="2"/>
</dbReference>
<dbReference type="SMART" id="SM00128">
    <property type="entry name" value="IPPc"/>
    <property type="match status" value="1"/>
</dbReference>
<dbReference type="SUPFAM" id="SSF56219">
    <property type="entry name" value="DNase I-like"/>
    <property type="match status" value="1"/>
</dbReference>